<dbReference type="EMBL" id="AC004450">
    <property type="protein sequence ID" value="AAC64310.2"/>
    <property type="molecule type" value="Genomic_DNA"/>
</dbReference>
<dbReference type="EMBL" id="AC006224">
    <property type="protein sequence ID" value="AAM15157.1"/>
    <property type="molecule type" value="Genomic_DNA"/>
</dbReference>
<dbReference type="EMBL" id="CP002685">
    <property type="protein sequence ID" value="AEC10229.1"/>
    <property type="molecule type" value="Genomic_DNA"/>
</dbReference>
<dbReference type="EMBL" id="CP002685">
    <property type="protein sequence ID" value="AEC10230.1"/>
    <property type="molecule type" value="Genomic_DNA"/>
</dbReference>
<dbReference type="EMBL" id="CP002685">
    <property type="protein sequence ID" value="ANM62378.1"/>
    <property type="molecule type" value="Genomic_DNA"/>
</dbReference>
<dbReference type="EMBL" id="AY091770">
    <property type="protein sequence ID" value="AAM10318.1"/>
    <property type="molecule type" value="mRNA"/>
</dbReference>
<dbReference type="EMBL" id="BT002277">
    <property type="protein sequence ID" value="AAN72288.1"/>
    <property type="molecule type" value="mRNA"/>
</dbReference>
<dbReference type="EMBL" id="AK316805">
    <property type="status" value="NOT_ANNOTATED_CDS"/>
    <property type="molecule type" value="mRNA"/>
</dbReference>
<dbReference type="EMBL" id="AY084884">
    <property type="protein sequence ID" value="AAM61447.1"/>
    <property type="molecule type" value="mRNA"/>
</dbReference>
<dbReference type="PIR" id="D84863">
    <property type="entry name" value="D84863"/>
</dbReference>
<dbReference type="RefSeq" id="NP_001324539.1">
    <property type="nucleotide sequence ID" value="NM_001337021.1"/>
</dbReference>
<dbReference type="RefSeq" id="NP_850390.1">
    <property type="nucleotide sequence ID" value="NM_180059.1"/>
</dbReference>
<dbReference type="RefSeq" id="NP_850391.1">
    <property type="nucleotide sequence ID" value="NM_180060.3"/>
</dbReference>
<dbReference type="SMR" id="Q9ZW74"/>
<dbReference type="FunCoup" id="Q9ZW74">
    <property type="interactions" value="3528"/>
</dbReference>
<dbReference type="STRING" id="3702.Q9ZW74"/>
<dbReference type="TCDB" id="3.A.16.1.5">
    <property type="family name" value="the endoplasmic reticular retrotranslocon (er-rt) family"/>
</dbReference>
<dbReference type="GlyGen" id="Q9ZW74">
    <property type="glycosylation" value="1 site"/>
</dbReference>
<dbReference type="iPTMnet" id="Q9ZW74"/>
<dbReference type="PaxDb" id="3702-AT2G43210.1"/>
<dbReference type="ProteomicsDB" id="226459"/>
<dbReference type="EnsemblPlants" id="AT2G43210.1">
    <property type="protein sequence ID" value="AT2G43210.1"/>
    <property type="gene ID" value="AT2G43210"/>
</dbReference>
<dbReference type="EnsemblPlants" id="AT2G43210.2">
    <property type="protein sequence ID" value="AT2G43210.2"/>
    <property type="gene ID" value="AT2G43210"/>
</dbReference>
<dbReference type="EnsemblPlants" id="AT2G43210.3">
    <property type="protein sequence ID" value="AT2G43210.3"/>
    <property type="gene ID" value="AT2G43210"/>
</dbReference>
<dbReference type="GeneID" id="818922"/>
<dbReference type="Gramene" id="AT2G43210.1">
    <property type="protein sequence ID" value="AT2G43210.1"/>
    <property type="gene ID" value="AT2G43210"/>
</dbReference>
<dbReference type="Gramene" id="AT2G43210.2">
    <property type="protein sequence ID" value="AT2G43210.2"/>
    <property type="gene ID" value="AT2G43210"/>
</dbReference>
<dbReference type="Gramene" id="AT2G43210.3">
    <property type="protein sequence ID" value="AT2G43210.3"/>
    <property type="gene ID" value="AT2G43210"/>
</dbReference>
<dbReference type="KEGG" id="ath:AT2G43210"/>
<dbReference type="Araport" id="AT2G43210"/>
<dbReference type="TAIR" id="AT2G43210"/>
<dbReference type="eggNOG" id="KOG2507">
    <property type="taxonomic scope" value="Eukaryota"/>
</dbReference>
<dbReference type="HOGENOM" id="CLU_030220_0_0_1"/>
<dbReference type="InParanoid" id="Q9ZW74"/>
<dbReference type="OMA" id="FEPNNTS"/>
<dbReference type="PhylomeDB" id="Q9ZW74"/>
<dbReference type="PRO" id="PR:Q9ZW74"/>
<dbReference type="Proteomes" id="UP000006548">
    <property type="component" value="Chromosome 2"/>
</dbReference>
<dbReference type="ExpressionAtlas" id="Q9ZW74">
    <property type="expression patterns" value="baseline and differential"/>
</dbReference>
<dbReference type="CDD" id="cd02958">
    <property type="entry name" value="UAS"/>
    <property type="match status" value="1"/>
</dbReference>
<dbReference type="CDD" id="cd01767">
    <property type="entry name" value="UBX"/>
    <property type="match status" value="1"/>
</dbReference>
<dbReference type="Gene3D" id="3.40.30.10">
    <property type="entry name" value="Glutaredoxin"/>
    <property type="match status" value="1"/>
</dbReference>
<dbReference type="Gene3D" id="3.10.20.90">
    <property type="entry name" value="Phosphatidylinositol 3-kinase Catalytic Subunit, Chain A, domain 1"/>
    <property type="match status" value="1"/>
</dbReference>
<dbReference type="InterPro" id="IPR036249">
    <property type="entry name" value="Thioredoxin-like_sf"/>
</dbReference>
<dbReference type="InterPro" id="IPR029071">
    <property type="entry name" value="Ubiquitin-like_domsf"/>
</dbReference>
<dbReference type="InterPro" id="IPR001012">
    <property type="entry name" value="UBX_dom"/>
</dbReference>
<dbReference type="PANTHER" id="PTHR47770">
    <property type="entry name" value="PLANT UBX DOMAIN-CONTAINING PROTEIN 11"/>
    <property type="match status" value="1"/>
</dbReference>
<dbReference type="PANTHER" id="PTHR47770:SF1">
    <property type="entry name" value="PLANT UBX DOMAIN-CONTAINING PROTEIN 11"/>
    <property type="match status" value="1"/>
</dbReference>
<dbReference type="Pfam" id="PF00789">
    <property type="entry name" value="UBX"/>
    <property type="match status" value="1"/>
</dbReference>
<dbReference type="SMART" id="SM00166">
    <property type="entry name" value="UBX"/>
    <property type="match status" value="1"/>
</dbReference>
<dbReference type="SUPFAM" id="SSF52833">
    <property type="entry name" value="Thioredoxin-like"/>
    <property type="match status" value="1"/>
</dbReference>
<dbReference type="SUPFAM" id="SSF54236">
    <property type="entry name" value="Ubiquitin-like"/>
    <property type="match status" value="1"/>
</dbReference>
<dbReference type="PROSITE" id="PS50033">
    <property type="entry name" value="UBX"/>
    <property type="match status" value="1"/>
</dbReference>
<organism>
    <name type="scientific">Arabidopsis thaliana</name>
    <name type="common">Mouse-ear cress</name>
    <dbReference type="NCBI Taxonomy" id="3702"/>
    <lineage>
        <taxon>Eukaryota</taxon>
        <taxon>Viridiplantae</taxon>
        <taxon>Streptophyta</taxon>
        <taxon>Embryophyta</taxon>
        <taxon>Tracheophyta</taxon>
        <taxon>Spermatophyta</taxon>
        <taxon>Magnoliopsida</taxon>
        <taxon>eudicotyledons</taxon>
        <taxon>Gunneridae</taxon>
        <taxon>Pentapetalae</taxon>
        <taxon>rosids</taxon>
        <taxon>malvids</taxon>
        <taxon>Brassicales</taxon>
        <taxon>Brassicaceae</taxon>
        <taxon>Camelineae</taxon>
        <taxon>Arabidopsis</taxon>
    </lineage>
</organism>
<protein>
    <recommendedName>
        <fullName evidence="4">Plant UBX domain-containing protein 11</fullName>
        <shortName evidence="4">PUX11</shortName>
    </recommendedName>
    <alternativeName>
        <fullName evidence="5">CDC48-interacting UBX-domain protein 11</fullName>
    </alternativeName>
</protein>
<feature type="chain" id="PRO_0000432609" description="Plant UBX domain-containing protein 11">
    <location>
        <begin position="1"/>
        <end position="531"/>
    </location>
</feature>
<feature type="domain" description="UBX" evidence="1">
    <location>
        <begin position="312"/>
        <end position="390"/>
    </location>
</feature>
<feature type="region of interest" description="Disordered" evidence="2">
    <location>
        <begin position="160"/>
        <end position="316"/>
    </location>
</feature>
<feature type="region of interest" description="Disordered" evidence="2">
    <location>
        <begin position="441"/>
        <end position="531"/>
    </location>
</feature>
<feature type="compositionally biased region" description="Low complexity" evidence="2">
    <location>
        <begin position="160"/>
        <end position="173"/>
    </location>
</feature>
<feature type="compositionally biased region" description="Polar residues" evidence="2">
    <location>
        <begin position="174"/>
        <end position="190"/>
    </location>
</feature>
<feature type="compositionally biased region" description="Polar residues" evidence="2">
    <location>
        <begin position="201"/>
        <end position="214"/>
    </location>
</feature>
<feature type="compositionally biased region" description="Basic and acidic residues" evidence="2">
    <location>
        <begin position="290"/>
        <end position="301"/>
    </location>
</feature>
<feature type="compositionally biased region" description="Polar residues" evidence="2">
    <location>
        <begin position="441"/>
        <end position="478"/>
    </location>
</feature>
<feature type="compositionally biased region" description="Polar residues" evidence="2">
    <location>
        <begin position="486"/>
        <end position="496"/>
    </location>
</feature>
<feature type="modified residue" description="N-acetylmethionine" evidence="9">
    <location>
        <position position="1"/>
    </location>
</feature>
<feature type="sequence conflict" description="In Ref. 3; AAM10318/AAN72288." evidence="5" ref="3">
    <original>D</original>
    <variation>N</variation>
    <location>
        <position position="413"/>
    </location>
</feature>
<proteinExistence type="evidence at protein level"/>
<sequence length="531" mass="57099">MEALSSLTFKGSLPEAIFEAKGKKKLFVVYISGEDEESDKLNRLTWTDASVADSLSKYCILVHIQAGSVDATNFSAIYPYSSVPCIAAIGFSGTQVWRTEGFITAEDLASSLEKAWLGLHIQETTASIFSAALASQNSETPVSSASSVVLPPGSVPLDAAVASPSTASSVQPSETKSTVTSASTTENNDGTVAVKGKESAEPSNLCDTTKNQPAPSVDGTKANVEHEATETPLRVQAEKEPIRPTAPGTNDNTSRVRSSVDRKRKQGTVINEEDSGVGVSGRDINLTKSVDTKETMKPKDEGGEEEDGEKSKKASDVHLNIRLPDGSSLQEKFSVTSILRMVKDYVNSNQTIGLGAYDLAVPYPRKVYTDQDLDKSLSELRLFDRQALVVVPRKRATVYQRGTSYSESNNNTDPNSGGYFAYVRRVLSYANPFSYFGGGTANASSSVPERQTRPNTEVRNNLGQVGTSFQDPSEGRSNVRNRRPTTSRIGSNIHTLNHNEDEAPFGDGNAFWNGNSTQYGGGSGGDSNDRR</sequence>
<reference key="1">
    <citation type="journal article" date="1999" name="Nature">
        <title>Sequence and analysis of chromosome 2 of the plant Arabidopsis thaliana.</title>
        <authorList>
            <person name="Lin X."/>
            <person name="Kaul S."/>
            <person name="Rounsley S.D."/>
            <person name="Shea T.P."/>
            <person name="Benito M.-I."/>
            <person name="Town C.D."/>
            <person name="Fujii C.Y."/>
            <person name="Mason T.M."/>
            <person name="Bowman C.L."/>
            <person name="Barnstead M.E."/>
            <person name="Feldblyum T.V."/>
            <person name="Buell C.R."/>
            <person name="Ketchum K.A."/>
            <person name="Lee J.J."/>
            <person name="Ronning C.M."/>
            <person name="Koo H.L."/>
            <person name="Moffat K.S."/>
            <person name="Cronin L.A."/>
            <person name="Shen M."/>
            <person name="Pai G."/>
            <person name="Van Aken S."/>
            <person name="Umayam L."/>
            <person name="Tallon L.J."/>
            <person name="Gill J.E."/>
            <person name="Adams M.D."/>
            <person name="Carrera A.J."/>
            <person name="Creasy T.H."/>
            <person name="Goodman H.M."/>
            <person name="Somerville C.R."/>
            <person name="Copenhaver G.P."/>
            <person name="Preuss D."/>
            <person name="Nierman W.C."/>
            <person name="White O."/>
            <person name="Eisen J.A."/>
            <person name="Salzberg S.L."/>
            <person name="Fraser C.M."/>
            <person name="Venter J.C."/>
        </authorList>
    </citation>
    <scope>NUCLEOTIDE SEQUENCE [LARGE SCALE GENOMIC DNA]</scope>
    <source>
        <strain>cv. Columbia</strain>
    </source>
</reference>
<reference key="2">
    <citation type="journal article" date="2017" name="Plant J.">
        <title>Araport11: a complete reannotation of the Arabidopsis thaliana reference genome.</title>
        <authorList>
            <person name="Cheng C.Y."/>
            <person name="Krishnakumar V."/>
            <person name="Chan A.P."/>
            <person name="Thibaud-Nissen F."/>
            <person name="Schobel S."/>
            <person name="Town C.D."/>
        </authorList>
    </citation>
    <scope>GENOME REANNOTATION</scope>
    <source>
        <strain>cv. Columbia</strain>
    </source>
</reference>
<reference key="3">
    <citation type="journal article" date="2003" name="Science">
        <title>Empirical analysis of transcriptional activity in the Arabidopsis genome.</title>
        <authorList>
            <person name="Yamada K."/>
            <person name="Lim J."/>
            <person name="Dale J.M."/>
            <person name="Chen H."/>
            <person name="Shinn P."/>
            <person name="Palm C.J."/>
            <person name="Southwick A.M."/>
            <person name="Wu H.C."/>
            <person name="Kim C.J."/>
            <person name="Nguyen M."/>
            <person name="Pham P.K."/>
            <person name="Cheuk R.F."/>
            <person name="Karlin-Newmann G."/>
            <person name="Liu S.X."/>
            <person name="Lam B."/>
            <person name="Sakano H."/>
            <person name="Wu T."/>
            <person name="Yu G."/>
            <person name="Miranda M."/>
            <person name="Quach H.L."/>
            <person name="Tripp M."/>
            <person name="Chang C.H."/>
            <person name="Lee J.M."/>
            <person name="Toriumi M.J."/>
            <person name="Chan M.M."/>
            <person name="Tang C.C."/>
            <person name="Onodera C.S."/>
            <person name="Deng J.M."/>
            <person name="Akiyama K."/>
            <person name="Ansari Y."/>
            <person name="Arakawa T."/>
            <person name="Banh J."/>
            <person name="Banno F."/>
            <person name="Bowser L."/>
            <person name="Brooks S.Y."/>
            <person name="Carninci P."/>
            <person name="Chao Q."/>
            <person name="Choy N."/>
            <person name="Enju A."/>
            <person name="Goldsmith A.D."/>
            <person name="Gurjal M."/>
            <person name="Hansen N.F."/>
            <person name="Hayashizaki Y."/>
            <person name="Johnson-Hopson C."/>
            <person name="Hsuan V.W."/>
            <person name="Iida K."/>
            <person name="Karnes M."/>
            <person name="Khan S."/>
            <person name="Koesema E."/>
            <person name="Ishida J."/>
            <person name="Jiang P.X."/>
            <person name="Jones T."/>
            <person name="Kawai J."/>
            <person name="Kamiya A."/>
            <person name="Meyers C."/>
            <person name="Nakajima M."/>
            <person name="Narusaka M."/>
            <person name="Seki M."/>
            <person name="Sakurai T."/>
            <person name="Satou M."/>
            <person name="Tamse R."/>
            <person name="Vaysberg M."/>
            <person name="Wallender E.K."/>
            <person name="Wong C."/>
            <person name="Yamamura Y."/>
            <person name="Yuan S."/>
            <person name="Shinozaki K."/>
            <person name="Davis R.W."/>
            <person name="Theologis A."/>
            <person name="Ecker J.R."/>
        </authorList>
    </citation>
    <scope>NUCLEOTIDE SEQUENCE [LARGE SCALE MRNA]</scope>
    <source>
        <strain>cv. Columbia</strain>
    </source>
</reference>
<reference key="4">
    <citation type="journal article" date="2009" name="DNA Res.">
        <title>Analysis of multiple occurrences of alternative splicing events in Arabidopsis thaliana using novel sequenced full-length cDNAs.</title>
        <authorList>
            <person name="Iida K."/>
            <person name="Fukami-Kobayashi K."/>
            <person name="Toyoda A."/>
            <person name="Sakaki Y."/>
            <person name="Kobayashi M."/>
            <person name="Seki M."/>
            <person name="Shinozaki K."/>
        </authorList>
    </citation>
    <scope>NUCLEOTIDE SEQUENCE [LARGE SCALE MRNA]</scope>
    <source>
        <strain>cv. Columbia</strain>
    </source>
</reference>
<reference key="5">
    <citation type="submission" date="2002-03" db="EMBL/GenBank/DDBJ databases">
        <title>Full-length cDNA from Arabidopsis thaliana.</title>
        <authorList>
            <person name="Brover V.V."/>
            <person name="Troukhan M.E."/>
            <person name="Alexandrov N.A."/>
            <person name="Lu Y.-P."/>
            <person name="Flavell R.B."/>
            <person name="Feldmann K.A."/>
        </authorList>
    </citation>
    <scope>NUCLEOTIDE SEQUENCE [LARGE SCALE MRNA]</scope>
</reference>
<reference key="6">
    <citation type="book" date="2005" name="Proceedings of the 16th international conference on Arabidopsis research">
        <title>The plant UBX-domain containing (PUX) protein family regulates the function of Arabidopsis CDC48, a conserved essential AAA-ATPase.</title>
        <authorList>
            <person name="Posthuma R."/>
            <person name="Rancour D."/>
            <person name="Park S."/>
            <person name="Bates B."/>
            <person name="Bednarek S."/>
        </authorList>
    </citation>
    <scope>GENE FAMILY</scope>
    <scope>INTERACTION WITH CDC48A</scope>
</reference>
<reference key="7">
    <citation type="journal article" date="2012" name="Mol. Cell. Proteomics">
        <title>Comparative large-scale characterisation of plant vs. mammal proteins reveals similar and idiosyncratic N-alpha acetylation features.</title>
        <authorList>
            <person name="Bienvenut W.V."/>
            <person name="Sumpton D."/>
            <person name="Martinez A."/>
            <person name="Lilla S."/>
            <person name="Espagne C."/>
            <person name="Meinnel T."/>
            <person name="Giglione C."/>
        </authorList>
    </citation>
    <scope>ACETYLATION [LARGE SCALE ANALYSIS] AT MET-1</scope>
    <scope>IDENTIFICATION BY MASS SPECTROMETRY [LARGE SCALE ANALYSIS]</scope>
</reference>
<gene>
    <name evidence="4" type="primary">PUX11</name>
    <name evidence="6" type="ordered locus">At2g43210</name>
    <name evidence="7" type="ORF">F14B2.15</name>
    <name evidence="8" type="ORF">MFL8.1</name>
</gene>
<name>PUX11_ARATH</name>
<evidence type="ECO:0000255" key="1">
    <source>
        <dbReference type="PROSITE-ProRule" id="PRU00215"/>
    </source>
</evidence>
<evidence type="ECO:0000256" key="2">
    <source>
        <dbReference type="SAM" id="MobiDB-lite"/>
    </source>
</evidence>
<evidence type="ECO:0000269" key="3">
    <source ref="6"/>
</evidence>
<evidence type="ECO:0000303" key="4">
    <source ref="6"/>
</evidence>
<evidence type="ECO:0000305" key="5"/>
<evidence type="ECO:0000312" key="6">
    <source>
        <dbReference type="Araport" id="AT2G43210"/>
    </source>
</evidence>
<evidence type="ECO:0000312" key="7">
    <source>
        <dbReference type="EMBL" id="AAC64310.2"/>
    </source>
</evidence>
<evidence type="ECO:0000312" key="8">
    <source>
        <dbReference type="EMBL" id="AAM15157.1"/>
    </source>
</evidence>
<evidence type="ECO:0007744" key="9">
    <source>
    </source>
</evidence>
<keyword id="KW-0007">Acetylation</keyword>
<keyword id="KW-1185">Reference proteome</keyword>
<keyword id="KW-0833">Ubl conjugation pathway</keyword>
<comment type="subunit">
    <text evidence="3">Interacts with CDC48A.</text>
</comment>
<comment type="sequence caution" evidence="5">
    <conflict type="frameshift">
        <sequence resource="EMBL" id="AK316805"/>
    </conflict>
</comment>
<accession>Q9ZW74</accession>
<accession>Q8RWR0</accession>